<name>RBS3_AMAHP</name>
<reference key="1">
    <citation type="online journal article" date="1999" name="Plant Gene Register">
        <title>Three RbcS cDNAs from the C4 dicotyledonous plant Amaranthus hypochondriacus.</title>
        <authorList>
            <person name="Corey A.C."/>
            <person name="Dempsey D.A."/>
            <person name="Klessig D.F."/>
            <person name="Berry J.O."/>
        </authorList>
        <locator>PGR99-101</locator>
    </citation>
    <scope>NUCLEOTIDE SEQUENCE [MRNA]</scope>
    <source>
        <strain>R103</strain>
    </source>
</reference>
<protein>
    <recommendedName>
        <fullName evidence="1">Ribulose bisphosphate carboxylase small subunit, chloroplastic 3</fullName>
        <shortName evidence="1">RuBisCO small subunit 3</shortName>
    </recommendedName>
</protein>
<sequence>MASSLMSNAITAVVGASGAQANMVAPFNGLKSIASFPVTRKSNDITSIASNGGRVQCMQVWPPVGKKKFETLSYLPPLSDAQLLAQVQYLLNNGWIPCIEFELEHPFVYRENHRSPGYQDGRYWTMWKLPMYGCTDPAQVLNEVEEAKKAYPSAFIRIIGFDNKRQVQCVSFIAFKPPGY</sequence>
<dbReference type="EMBL" id="AF150667">
    <property type="protein sequence ID" value="AAD37440.1"/>
    <property type="molecule type" value="mRNA"/>
</dbReference>
<dbReference type="SMR" id="Q9XGX4"/>
<dbReference type="GO" id="GO:0009507">
    <property type="term" value="C:chloroplast"/>
    <property type="evidence" value="ECO:0007669"/>
    <property type="project" value="UniProtKB-SubCell"/>
</dbReference>
<dbReference type="GO" id="GO:0016984">
    <property type="term" value="F:ribulose-bisphosphate carboxylase activity"/>
    <property type="evidence" value="ECO:0007669"/>
    <property type="project" value="UniProtKB-UniRule"/>
</dbReference>
<dbReference type="GO" id="GO:0009853">
    <property type="term" value="P:photorespiration"/>
    <property type="evidence" value="ECO:0007669"/>
    <property type="project" value="UniProtKB-KW"/>
</dbReference>
<dbReference type="GO" id="GO:0019253">
    <property type="term" value="P:reductive pentose-phosphate cycle"/>
    <property type="evidence" value="ECO:0007669"/>
    <property type="project" value="UniProtKB-UniRule"/>
</dbReference>
<dbReference type="CDD" id="cd03527">
    <property type="entry name" value="RuBisCO_small"/>
    <property type="match status" value="1"/>
</dbReference>
<dbReference type="FunFam" id="3.30.190.10:FF:000001">
    <property type="entry name" value="Ribulose bisphosphate carboxylase small chain, chloroplastic"/>
    <property type="match status" value="1"/>
</dbReference>
<dbReference type="Gene3D" id="3.30.190.10">
    <property type="entry name" value="Ribulose bisphosphate carboxylase, small subunit"/>
    <property type="match status" value="1"/>
</dbReference>
<dbReference type="HAMAP" id="MF_00859">
    <property type="entry name" value="RuBisCO_S_bact"/>
    <property type="match status" value="1"/>
</dbReference>
<dbReference type="InterPro" id="IPR024681">
    <property type="entry name" value="RuBisCO_ssu"/>
</dbReference>
<dbReference type="InterPro" id="IPR000894">
    <property type="entry name" value="RuBisCO_ssu_dom"/>
</dbReference>
<dbReference type="InterPro" id="IPR024680">
    <property type="entry name" value="RuBisCO_ssu_N"/>
</dbReference>
<dbReference type="InterPro" id="IPR036385">
    <property type="entry name" value="RuBisCO_ssu_sf"/>
</dbReference>
<dbReference type="PANTHER" id="PTHR31262">
    <property type="entry name" value="RIBULOSE BISPHOSPHATE CARBOXYLASE SMALL CHAIN 1, CHLOROPLASTIC"/>
    <property type="match status" value="1"/>
</dbReference>
<dbReference type="PANTHER" id="PTHR31262:SF10">
    <property type="entry name" value="RIBULOSE BISPHOSPHATE CARBOXYLASE SMALL SUBUNIT 1A, CHLOROPLASTIC-RELATED"/>
    <property type="match status" value="1"/>
</dbReference>
<dbReference type="Pfam" id="PF12338">
    <property type="entry name" value="RbcS"/>
    <property type="match status" value="1"/>
</dbReference>
<dbReference type="Pfam" id="PF00101">
    <property type="entry name" value="RuBisCO_small"/>
    <property type="match status" value="1"/>
</dbReference>
<dbReference type="PRINTS" id="PR00152">
    <property type="entry name" value="RUBISCOSMALL"/>
</dbReference>
<dbReference type="SMART" id="SM00961">
    <property type="entry name" value="RuBisCO_small"/>
    <property type="match status" value="1"/>
</dbReference>
<dbReference type="SUPFAM" id="SSF55239">
    <property type="entry name" value="RuBisCO, small subunit"/>
    <property type="match status" value="1"/>
</dbReference>
<evidence type="ECO:0000255" key="1">
    <source>
        <dbReference type="HAMAP-Rule" id="MF_00860"/>
    </source>
</evidence>
<keyword id="KW-0113">Calvin cycle</keyword>
<keyword id="KW-0120">Carbon dioxide fixation</keyword>
<keyword id="KW-0150">Chloroplast</keyword>
<keyword id="KW-0601">Photorespiration</keyword>
<keyword id="KW-0602">Photosynthesis</keyword>
<keyword id="KW-0934">Plastid</keyword>
<keyword id="KW-0809">Transit peptide</keyword>
<gene>
    <name evidence="1" type="primary">RBCS3</name>
</gene>
<organism>
    <name type="scientific">Amaranthus hypochondriacus</name>
    <name type="common">Prince-of-Wales feather</name>
    <name type="synonym">Amaranthus hybridus var. hypochondriacus</name>
    <dbReference type="NCBI Taxonomy" id="28502"/>
    <lineage>
        <taxon>Eukaryota</taxon>
        <taxon>Viridiplantae</taxon>
        <taxon>Streptophyta</taxon>
        <taxon>Embryophyta</taxon>
        <taxon>Tracheophyta</taxon>
        <taxon>Spermatophyta</taxon>
        <taxon>Magnoliopsida</taxon>
        <taxon>eudicotyledons</taxon>
        <taxon>Gunneridae</taxon>
        <taxon>Pentapetalae</taxon>
        <taxon>Caryophyllales</taxon>
        <taxon>Amaranthaceae</taxon>
        <taxon>Amaranthus</taxon>
    </lineage>
</organism>
<comment type="function">
    <text evidence="1">RuBisCO catalyzes two reactions: the carboxylation of D-ribulose 1,5-bisphosphate, the primary event in carbon dioxide fixation, as well as the oxidative fragmentation of the pentose substrate. Both reactions occur simultaneously and in competition at the same active site. Although the small subunit is not catalytic it is essential for maximal activity.</text>
</comment>
<comment type="subunit">
    <text evidence="1">Heterohexadecamer of 8 large and 8 small subunits.</text>
</comment>
<comment type="subcellular location">
    <subcellularLocation>
        <location evidence="1">Plastid</location>
        <location evidence="1">Chloroplast</location>
    </subcellularLocation>
</comment>
<comment type="miscellaneous">
    <text evidence="1">The basic functional RuBisCO is composed of a large chain homodimer in a 'head-to-tail' conformation. In form I RuBisCO this homodimer is arranged in a barrel-like tetramer with the small subunits forming a tetrameric 'cap' on each end of the 'barrel'.</text>
</comment>
<comment type="similarity">
    <text evidence="1">Belongs to the RuBisCO small chain family.</text>
</comment>
<proteinExistence type="evidence at transcript level"/>
<accession>Q9XGX4</accession>
<feature type="transit peptide" description="Chloroplast" evidence="1">
    <location>
        <begin position="1"/>
        <end position="56"/>
    </location>
</feature>
<feature type="chain" id="PRO_0000031462" description="Ribulose bisphosphate carboxylase small subunit, chloroplastic 3" evidence="1">
    <location>
        <begin position="57"/>
        <end position="180"/>
    </location>
</feature>